<feature type="chain" id="PRO_1000068496" description="Agmatinase">
    <location>
        <begin position="1"/>
        <end position="306"/>
    </location>
</feature>
<feature type="binding site" evidence="1">
    <location>
        <position position="126"/>
    </location>
    <ligand>
        <name>Mn(2+)</name>
        <dbReference type="ChEBI" id="CHEBI:29035"/>
    </ligand>
</feature>
<feature type="binding site" evidence="1">
    <location>
        <position position="149"/>
    </location>
    <ligand>
        <name>Mn(2+)</name>
        <dbReference type="ChEBI" id="CHEBI:29035"/>
    </ligand>
</feature>
<feature type="binding site" evidence="1">
    <location>
        <position position="151"/>
    </location>
    <ligand>
        <name>Mn(2+)</name>
        <dbReference type="ChEBI" id="CHEBI:29035"/>
    </ligand>
</feature>
<feature type="binding site" evidence="1">
    <location>
        <position position="153"/>
    </location>
    <ligand>
        <name>Mn(2+)</name>
        <dbReference type="ChEBI" id="CHEBI:29035"/>
    </ligand>
</feature>
<feature type="binding site" evidence="1">
    <location>
        <position position="230"/>
    </location>
    <ligand>
        <name>Mn(2+)</name>
        <dbReference type="ChEBI" id="CHEBI:29035"/>
    </ligand>
</feature>
<feature type="binding site" evidence="1">
    <location>
        <position position="232"/>
    </location>
    <ligand>
        <name>Mn(2+)</name>
        <dbReference type="ChEBI" id="CHEBI:29035"/>
    </ligand>
</feature>
<protein>
    <recommendedName>
        <fullName evidence="1">Agmatinase</fullName>
        <ecNumber evidence="1">3.5.3.11</ecNumber>
    </recommendedName>
    <alternativeName>
        <fullName evidence="1">Agmatine ureohydrolase</fullName>
        <shortName evidence="1">AUH</shortName>
    </alternativeName>
</protein>
<comment type="function">
    <text evidence="1">Catalyzes the formation of putrescine from agmatine.</text>
</comment>
<comment type="catalytic activity">
    <reaction evidence="1">
        <text>agmatine + H2O = urea + putrescine</text>
        <dbReference type="Rhea" id="RHEA:13929"/>
        <dbReference type="ChEBI" id="CHEBI:15377"/>
        <dbReference type="ChEBI" id="CHEBI:16199"/>
        <dbReference type="ChEBI" id="CHEBI:58145"/>
        <dbReference type="ChEBI" id="CHEBI:326268"/>
        <dbReference type="EC" id="3.5.3.11"/>
    </reaction>
</comment>
<comment type="cofactor">
    <cofactor evidence="1">
        <name>Mn(2+)</name>
        <dbReference type="ChEBI" id="CHEBI:29035"/>
    </cofactor>
</comment>
<comment type="pathway">
    <text evidence="1">Amine and polyamine biosynthesis; putrescine biosynthesis via agmatine pathway; putrescine from agmatine: step 1/1.</text>
</comment>
<comment type="similarity">
    <text evidence="1">Belongs to the arginase family. Agmatinase subfamily.</text>
</comment>
<dbReference type="EC" id="3.5.3.11" evidence="1"/>
<dbReference type="EMBL" id="CP000653">
    <property type="protein sequence ID" value="ABP62005.1"/>
    <property type="molecule type" value="Genomic_DNA"/>
</dbReference>
<dbReference type="RefSeq" id="WP_015960333.1">
    <property type="nucleotide sequence ID" value="NC_009436.1"/>
</dbReference>
<dbReference type="SMR" id="A4WE75"/>
<dbReference type="STRING" id="399742.Ent638_3343"/>
<dbReference type="GeneID" id="93306309"/>
<dbReference type="KEGG" id="ent:Ent638_3343"/>
<dbReference type="eggNOG" id="COG0010">
    <property type="taxonomic scope" value="Bacteria"/>
</dbReference>
<dbReference type="HOGENOM" id="CLU_039478_0_0_6"/>
<dbReference type="OrthoDB" id="9789727at2"/>
<dbReference type="UniPathway" id="UPA00534">
    <property type="reaction ID" value="UER00287"/>
</dbReference>
<dbReference type="Proteomes" id="UP000000230">
    <property type="component" value="Chromosome"/>
</dbReference>
<dbReference type="GO" id="GO:0008783">
    <property type="term" value="F:agmatinase activity"/>
    <property type="evidence" value="ECO:0007669"/>
    <property type="project" value="UniProtKB-UniRule"/>
</dbReference>
<dbReference type="GO" id="GO:0030145">
    <property type="term" value="F:manganese ion binding"/>
    <property type="evidence" value="ECO:0007669"/>
    <property type="project" value="InterPro"/>
</dbReference>
<dbReference type="GO" id="GO:0033389">
    <property type="term" value="P:putrescine biosynthetic process from arginine, via agmatine"/>
    <property type="evidence" value="ECO:0007669"/>
    <property type="project" value="TreeGrafter"/>
</dbReference>
<dbReference type="GO" id="GO:0008295">
    <property type="term" value="P:spermidine biosynthetic process"/>
    <property type="evidence" value="ECO:0007669"/>
    <property type="project" value="UniProtKB-UniRule"/>
</dbReference>
<dbReference type="CDD" id="cd11592">
    <property type="entry name" value="Agmatinase_PAH"/>
    <property type="match status" value="1"/>
</dbReference>
<dbReference type="FunFam" id="3.40.800.10:FF:000001">
    <property type="entry name" value="Agmatinase"/>
    <property type="match status" value="1"/>
</dbReference>
<dbReference type="Gene3D" id="3.40.800.10">
    <property type="entry name" value="Ureohydrolase domain"/>
    <property type="match status" value="1"/>
</dbReference>
<dbReference type="HAMAP" id="MF_01418">
    <property type="entry name" value="SpeB"/>
    <property type="match status" value="1"/>
</dbReference>
<dbReference type="InterPro" id="IPR023694">
    <property type="entry name" value="Agmatinase"/>
</dbReference>
<dbReference type="InterPro" id="IPR005925">
    <property type="entry name" value="Agmatinase-rel"/>
</dbReference>
<dbReference type="InterPro" id="IPR006035">
    <property type="entry name" value="Ureohydrolase"/>
</dbReference>
<dbReference type="InterPro" id="IPR023696">
    <property type="entry name" value="Ureohydrolase_dom_sf"/>
</dbReference>
<dbReference type="InterPro" id="IPR020855">
    <property type="entry name" value="Ureohydrolase_Mn_BS"/>
</dbReference>
<dbReference type="NCBIfam" id="TIGR01230">
    <property type="entry name" value="agmatinase"/>
    <property type="match status" value="1"/>
</dbReference>
<dbReference type="NCBIfam" id="NF002564">
    <property type="entry name" value="PRK02190.1"/>
    <property type="match status" value="1"/>
</dbReference>
<dbReference type="PANTHER" id="PTHR11358">
    <property type="entry name" value="ARGINASE/AGMATINASE"/>
    <property type="match status" value="1"/>
</dbReference>
<dbReference type="PANTHER" id="PTHR11358:SF26">
    <property type="entry name" value="GUANIDINO ACID HYDROLASE, MITOCHONDRIAL"/>
    <property type="match status" value="1"/>
</dbReference>
<dbReference type="Pfam" id="PF00491">
    <property type="entry name" value="Arginase"/>
    <property type="match status" value="1"/>
</dbReference>
<dbReference type="PIRSF" id="PIRSF036979">
    <property type="entry name" value="Arginase"/>
    <property type="match status" value="1"/>
</dbReference>
<dbReference type="SUPFAM" id="SSF52768">
    <property type="entry name" value="Arginase/deacetylase"/>
    <property type="match status" value="1"/>
</dbReference>
<dbReference type="PROSITE" id="PS01053">
    <property type="entry name" value="ARGINASE_1"/>
    <property type="match status" value="1"/>
</dbReference>
<dbReference type="PROSITE" id="PS51409">
    <property type="entry name" value="ARGINASE_2"/>
    <property type="match status" value="1"/>
</dbReference>
<accession>A4WE75</accession>
<evidence type="ECO:0000255" key="1">
    <source>
        <dbReference type="HAMAP-Rule" id="MF_01418"/>
    </source>
</evidence>
<keyword id="KW-0378">Hydrolase</keyword>
<keyword id="KW-0464">Manganese</keyword>
<keyword id="KW-0479">Metal-binding</keyword>
<keyword id="KW-0620">Polyamine biosynthesis</keyword>
<keyword id="KW-0661">Putrescine biosynthesis</keyword>
<keyword id="KW-0745">Spermidine biosynthesis</keyword>
<name>SPEB_ENT38</name>
<proteinExistence type="inferred from homology"/>
<gene>
    <name evidence="1" type="primary">speB</name>
    <name type="ordered locus">Ent638_3343</name>
</gene>
<sequence length="306" mass="33481">MSTLGHQYDNSLVSNAFGFLRLPMNFQPYDSDADWVITGVPFDMATSGRAGGRHGPAAIRQVSTNLAWEHNRFPWNFDMRERLNVVDCGDLVYAFGDAREMSEKLQAHAEKLLAAGKRMLSFGGDHFVTLPLLRAHAKHFGKMALVHFDAHTDTYANGCEFDHGTMFYTAPNEGLIDPNHSVQIGIRTEFDKDNGFTVLDAGQVNDRGVDDIIAQVKQIVGDMPVYLTFDIDCLDPAFAPGTGTPVIGGLTSDRAIKLVRGLKDLNIVGMDVVEVAPAYDQSEITALAAATLALEMLYIQAAKKGE</sequence>
<organism>
    <name type="scientific">Enterobacter sp. (strain 638)</name>
    <dbReference type="NCBI Taxonomy" id="399742"/>
    <lineage>
        <taxon>Bacteria</taxon>
        <taxon>Pseudomonadati</taxon>
        <taxon>Pseudomonadota</taxon>
        <taxon>Gammaproteobacteria</taxon>
        <taxon>Enterobacterales</taxon>
        <taxon>Enterobacteriaceae</taxon>
        <taxon>Enterobacter</taxon>
    </lineage>
</organism>
<reference key="1">
    <citation type="journal article" date="2010" name="PLoS Genet.">
        <title>Genome sequence of the plant growth promoting endophytic bacterium Enterobacter sp. 638.</title>
        <authorList>
            <person name="Taghavi S."/>
            <person name="van der Lelie D."/>
            <person name="Hoffman A."/>
            <person name="Zhang Y.B."/>
            <person name="Walla M.D."/>
            <person name="Vangronsveld J."/>
            <person name="Newman L."/>
            <person name="Monchy S."/>
        </authorList>
    </citation>
    <scope>NUCLEOTIDE SEQUENCE [LARGE SCALE GENOMIC DNA]</scope>
    <source>
        <strain>638</strain>
    </source>
</reference>